<keyword id="KW-0479">Metal-binding</keyword>
<keyword id="KW-0637">Prenyltransferase</keyword>
<keyword id="KW-1185">Reference proteome</keyword>
<keyword id="KW-0677">Repeat</keyword>
<keyword id="KW-0808">Transferase</keyword>
<keyword id="KW-0862">Zinc</keyword>
<protein>
    <recommendedName>
        <fullName evidence="7">Protein farnesyltransferase subunit beta</fullName>
        <shortName evidence="7">FTase-beta</shortName>
        <ecNumber evidence="4">2.5.1.58</ecNumber>
    </recommendedName>
    <alternativeName>
        <fullName evidence="7">CAAX farnesyltransferase subunit beta</fullName>
    </alternativeName>
    <alternativeName>
        <fullName evidence="6">Enhanced response to abscisic acid 1</fullName>
    </alternativeName>
    <alternativeName>
        <fullName evidence="7">Ras proteins prenyltransferase subunit beta</fullName>
    </alternativeName>
</protein>
<dbReference type="EC" id="2.5.1.58" evidence="4"/>
<dbReference type="EMBL" id="AF214106">
    <property type="protein sequence ID" value="AAF74564.1"/>
    <property type="molecule type" value="mRNA"/>
</dbReference>
<dbReference type="EMBL" id="AB010699">
    <property type="protein sequence ID" value="BAB10909.1"/>
    <property type="status" value="ALT_SEQ"/>
    <property type="molecule type" value="Genomic_DNA"/>
</dbReference>
<dbReference type="EMBL" id="CP002688">
    <property type="protein sequence ID" value="AED94529.1"/>
    <property type="molecule type" value="Genomic_DNA"/>
</dbReference>
<dbReference type="EMBL" id="BT030457">
    <property type="protein sequence ID" value="ABP88111.1"/>
    <property type="molecule type" value="mRNA"/>
</dbReference>
<dbReference type="EMBL" id="AY099623">
    <property type="protein sequence ID" value="AAM20474.1"/>
    <property type="status" value="ALT_INIT"/>
    <property type="molecule type" value="mRNA"/>
</dbReference>
<dbReference type="EMBL" id="U46574">
    <property type="protein sequence ID" value="AAA87585.1"/>
    <property type="molecule type" value="Genomic_DNA"/>
</dbReference>
<dbReference type="EMBL" id="U44849">
    <property type="protein sequence ID" value="AAA86658.1"/>
    <property type="molecule type" value="mRNA"/>
</dbReference>
<dbReference type="RefSeq" id="NP_198844.1">
    <property type="nucleotide sequence ID" value="NM_123392.2"/>
</dbReference>
<dbReference type="SMR" id="Q38920"/>
<dbReference type="BioGRID" id="19277">
    <property type="interactions" value="1"/>
</dbReference>
<dbReference type="FunCoup" id="Q38920">
    <property type="interactions" value="4267"/>
</dbReference>
<dbReference type="IntAct" id="Q38920">
    <property type="interactions" value="1"/>
</dbReference>
<dbReference type="STRING" id="3702.Q38920"/>
<dbReference type="PaxDb" id="3702-AT5G40280.1"/>
<dbReference type="EnsemblPlants" id="AT5G40280.1">
    <property type="protein sequence ID" value="AT5G40280.1"/>
    <property type="gene ID" value="AT5G40280"/>
</dbReference>
<dbReference type="GeneID" id="834026"/>
<dbReference type="Gramene" id="AT5G40280.1">
    <property type="protein sequence ID" value="AT5G40280.1"/>
    <property type="gene ID" value="AT5G40280"/>
</dbReference>
<dbReference type="KEGG" id="ath:AT5G40280"/>
<dbReference type="Araport" id="AT5G40280"/>
<dbReference type="TAIR" id="AT5G40280">
    <property type="gene designation" value="ERA1"/>
</dbReference>
<dbReference type="eggNOG" id="KOG0365">
    <property type="taxonomic scope" value="Eukaryota"/>
</dbReference>
<dbReference type="HOGENOM" id="CLU_028946_0_1_1"/>
<dbReference type="InParanoid" id="Q38920"/>
<dbReference type="OMA" id="MLYWIAN"/>
<dbReference type="BioCyc" id="ARA:AT5G40280-MONOMER"/>
<dbReference type="BioCyc" id="MetaCyc:AT5G40280-MONOMER"/>
<dbReference type="BRENDA" id="2.5.1.58">
    <property type="organism ID" value="399"/>
</dbReference>
<dbReference type="PRO" id="PR:Q38920"/>
<dbReference type="Proteomes" id="UP000006548">
    <property type="component" value="Chromosome 5"/>
</dbReference>
<dbReference type="ExpressionAtlas" id="Q38920">
    <property type="expression patterns" value="baseline and differential"/>
</dbReference>
<dbReference type="GO" id="GO:0005965">
    <property type="term" value="C:protein farnesyltransferase complex"/>
    <property type="evidence" value="ECO:0000250"/>
    <property type="project" value="UniProtKB"/>
</dbReference>
<dbReference type="GO" id="GO:0004311">
    <property type="term" value="F:geranylgeranyl diphosphate synthase activity"/>
    <property type="evidence" value="ECO:0000250"/>
    <property type="project" value="TAIR"/>
</dbReference>
<dbReference type="GO" id="GO:0004660">
    <property type="term" value="F:protein farnesyltransferase activity"/>
    <property type="evidence" value="ECO:0000250"/>
    <property type="project" value="UniProtKB"/>
</dbReference>
<dbReference type="GO" id="GO:0008270">
    <property type="term" value="F:zinc ion binding"/>
    <property type="evidence" value="ECO:0000250"/>
    <property type="project" value="UniProtKB"/>
</dbReference>
<dbReference type="GO" id="GO:0042335">
    <property type="term" value="P:cuticle development"/>
    <property type="evidence" value="ECO:0000315"/>
    <property type="project" value="TAIR"/>
</dbReference>
<dbReference type="GO" id="GO:0009788">
    <property type="term" value="P:negative regulation of abscisic acid-activated signaling pathway"/>
    <property type="evidence" value="ECO:0000315"/>
    <property type="project" value="UniProtKB"/>
</dbReference>
<dbReference type="GO" id="GO:0018343">
    <property type="term" value="P:protein farnesylation"/>
    <property type="evidence" value="ECO:0000250"/>
    <property type="project" value="UniProtKB"/>
</dbReference>
<dbReference type="GO" id="GO:0018342">
    <property type="term" value="P:protein prenylation"/>
    <property type="evidence" value="ECO:0000315"/>
    <property type="project" value="TAIR"/>
</dbReference>
<dbReference type="GO" id="GO:0009934">
    <property type="term" value="P:regulation of meristem structural organization"/>
    <property type="evidence" value="ECO:0000315"/>
    <property type="project" value="TAIR"/>
</dbReference>
<dbReference type="GO" id="GO:0047484">
    <property type="term" value="P:regulation of response to osmotic stress"/>
    <property type="evidence" value="ECO:0000315"/>
    <property type="project" value="UniProtKB"/>
</dbReference>
<dbReference type="GO" id="GO:1901000">
    <property type="term" value="P:regulation of response to salt stress"/>
    <property type="evidence" value="ECO:0000315"/>
    <property type="project" value="UniProtKB"/>
</dbReference>
<dbReference type="GO" id="GO:0009737">
    <property type="term" value="P:response to abscisic acid"/>
    <property type="evidence" value="ECO:0000315"/>
    <property type="project" value="TAIR"/>
</dbReference>
<dbReference type="GO" id="GO:0009620">
    <property type="term" value="P:response to fungus"/>
    <property type="evidence" value="ECO:0000316"/>
    <property type="project" value="TAIR"/>
</dbReference>
<dbReference type="GO" id="GO:0009414">
    <property type="term" value="P:response to water deprivation"/>
    <property type="evidence" value="ECO:0000315"/>
    <property type="project" value="TAIR"/>
</dbReference>
<dbReference type="GO" id="GO:1990069">
    <property type="term" value="P:stomatal opening"/>
    <property type="evidence" value="ECO:0000315"/>
    <property type="project" value="TAIR"/>
</dbReference>
<dbReference type="CDD" id="cd02893">
    <property type="entry name" value="FTase"/>
    <property type="match status" value="1"/>
</dbReference>
<dbReference type="FunFam" id="1.50.10.20:FF:000017">
    <property type="entry name" value="Protein farnesyltransferase subunit beta"/>
    <property type="match status" value="1"/>
</dbReference>
<dbReference type="Gene3D" id="1.50.10.20">
    <property type="match status" value="1"/>
</dbReference>
<dbReference type="InterPro" id="IPR026872">
    <property type="entry name" value="FTB"/>
</dbReference>
<dbReference type="InterPro" id="IPR045089">
    <property type="entry name" value="PGGT1B-like"/>
</dbReference>
<dbReference type="InterPro" id="IPR001330">
    <property type="entry name" value="Prenyltrans"/>
</dbReference>
<dbReference type="InterPro" id="IPR008930">
    <property type="entry name" value="Terpenoid_cyclase/PrenylTrfase"/>
</dbReference>
<dbReference type="PANTHER" id="PTHR11774">
    <property type="entry name" value="GERANYLGERANYL TRANSFERASE TYPE BETA SUBUNIT"/>
    <property type="match status" value="1"/>
</dbReference>
<dbReference type="PANTHER" id="PTHR11774:SF6">
    <property type="entry name" value="PROTEIN FARNESYLTRANSFERASE SUBUNIT BETA"/>
    <property type="match status" value="1"/>
</dbReference>
<dbReference type="Pfam" id="PF00432">
    <property type="entry name" value="Prenyltrans"/>
    <property type="match status" value="1"/>
</dbReference>
<dbReference type="SUPFAM" id="SSF48239">
    <property type="entry name" value="Terpenoid cyclases/Protein prenyltransferases"/>
    <property type="match status" value="1"/>
</dbReference>
<name>FNTB_ARATH</name>
<gene>
    <name type="primary">FTB</name>
    <name evidence="6" type="synonym">ERA1</name>
    <name evidence="6" type="synonym">WIGGUM</name>
    <name evidence="9" type="ordered locus">At5g40280</name>
    <name evidence="10" type="ORF">MSN9.20</name>
</gene>
<reference key="1">
    <citation type="journal article" date="2000" name="Proc. Natl. Acad. Sci. U.S.A.">
        <title>Cloning of the Arabidopsis WIGGUM gene identifies a role for farnesylation in meristem development.</title>
        <authorList>
            <person name="Ziegelhoffer E.C."/>
            <person name="Medrano L.J."/>
            <person name="Meyerowitz E.M."/>
        </authorList>
    </citation>
    <scope>NUCLEOTIDE SEQUENCE [MRNA]</scope>
    <scope>DISRUPTION PHENOTYPE</scope>
    <source>
        <strain>cv. Landsberg erecta</strain>
    </source>
</reference>
<reference key="2">
    <citation type="journal article" date="1998" name="DNA Res.">
        <title>Structural analysis of Arabidopsis thaliana chromosome 5. V. Sequence features of the regions of 1,381,565 bp covered by twenty one physically assigned P1 and TAC clones.</title>
        <authorList>
            <person name="Kaneko T."/>
            <person name="Kotani H."/>
            <person name="Nakamura Y."/>
            <person name="Sato S."/>
            <person name="Asamizu E."/>
            <person name="Miyajima N."/>
            <person name="Tabata S."/>
        </authorList>
    </citation>
    <scope>NUCLEOTIDE SEQUENCE [LARGE SCALE GENOMIC DNA]</scope>
    <source>
        <strain>cv. Columbia</strain>
    </source>
</reference>
<reference key="3">
    <citation type="journal article" date="2017" name="Plant J.">
        <title>Araport11: a complete reannotation of the Arabidopsis thaliana reference genome.</title>
        <authorList>
            <person name="Cheng C.Y."/>
            <person name="Krishnakumar V."/>
            <person name="Chan A.P."/>
            <person name="Thibaud-Nissen F."/>
            <person name="Schobel S."/>
            <person name="Town C.D."/>
        </authorList>
    </citation>
    <scope>GENOME REANNOTATION</scope>
    <source>
        <strain>cv. Columbia</strain>
    </source>
</reference>
<reference key="4">
    <citation type="submission" date="2007-04" db="EMBL/GenBank/DDBJ databases">
        <title>Arabidopsis ORF clones.</title>
        <authorList>
            <person name="Bautista-Mercan V.R."/>
            <person name="Kim C.J."/>
            <person name="Chen H."/>
            <person name="Wu S.Y."/>
            <person name="De Los Reyes C."/>
            <person name="Ecker J.R."/>
        </authorList>
    </citation>
    <scope>NUCLEOTIDE SEQUENCE [LARGE SCALE MRNA]</scope>
    <source>
        <strain>cv. Columbia</strain>
    </source>
</reference>
<reference key="5">
    <citation type="journal article" date="2003" name="Science">
        <title>Empirical analysis of transcriptional activity in the Arabidopsis genome.</title>
        <authorList>
            <person name="Yamada K."/>
            <person name="Lim J."/>
            <person name="Dale J.M."/>
            <person name="Chen H."/>
            <person name="Shinn P."/>
            <person name="Palm C.J."/>
            <person name="Southwick A.M."/>
            <person name="Wu H.C."/>
            <person name="Kim C.J."/>
            <person name="Nguyen M."/>
            <person name="Pham P.K."/>
            <person name="Cheuk R.F."/>
            <person name="Karlin-Newmann G."/>
            <person name="Liu S.X."/>
            <person name="Lam B."/>
            <person name="Sakano H."/>
            <person name="Wu T."/>
            <person name="Yu G."/>
            <person name="Miranda M."/>
            <person name="Quach H.L."/>
            <person name="Tripp M."/>
            <person name="Chang C.H."/>
            <person name="Lee J.M."/>
            <person name="Toriumi M.J."/>
            <person name="Chan M.M."/>
            <person name="Tang C.C."/>
            <person name="Onodera C.S."/>
            <person name="Deng J.M."/>
            <person name="Akiyama K."/>
            <person name="Ansari Y."/>
            <person name="Arakawa T."/>
            <person name="Banh J."/>
            <person name="Banno F."/>
            <person name="Bowser L."/>
            <person name="Brooks S.Y."/>
            <person name="Carninci P."/>
            <person name="Chao Q."/>
            <person name="Choy N."/>
            <person name="Enju A."/>
            <person name="Goldsmith A.D."/>
            <person name="Gurjal M."/>
            <person name="Hansen N.F."/>
            <person name="Hayashizaki Y."/>
            <person name="Johnson-Hopson C."/>
            <person name="Hsuan V.W."/>
            <person name="Iida K."/>
            <person name="Karnes M."/>
            <person name="Khan S."/>
            <person name="Koesema E."/>
            <person name="Ishida J."/>
            <person name="Jiang P.X."/>
            <person name="Jones T."/>
            <person name="Kawai J."/>
            <person name="Kamiya A."/>
            <person name="Meyers C."/>
            <person name="Nakajima M."/>
            <person name="Narusaka M."/>
            <person name="Seki M."/>
            <person name="Sakurai T."/>
            <person name="Satou M."/>
            <person name="Tamse R."/>
            <person name="Vaysberg M."/>
            <person name="Wallender E.K."/>
            <person name="Wong C."/>
            <person name="Yamamura Y."/>
            <person name="Yuan S."/>
            <person name="Shinozaki K."/>
            <person name="Davis R.W."/>
            <person name="Theologis A."/>
            <person name="Ecker J.R."/>
        </authorList>
    </citation>
    <scope>NUCLEOTIDE SEQUENCE [LARGE SCALE MRNA] OF 11-482</scope>
    <source>
        <strain>cv. Columbia</strain>
    </source>
</reference>
<reference key="6">
    <citation type="submission" date="1996-01" db="EMBL/GenBank/DDBJ databases">
        <authorList>
            <person name="Cutler S.R."/>
            <person name="Ghassemian M."/>
            <person name="Bonetta D."/>
            <person name="Cooney S.E."/>
            <person name="Mccourt P."/>
        </authorList>
    </citation>
    <scope>NUCLEOTIDE SEQUENCE [GENOMIC DNA / MRNA] OF 79-482</scope>
</reference>
<reference key="7">
    <citation type="journal article" date="2010" name="BMC Plant Biol.">
        <title>The CaaX specificities of Arabidopsis protein prenyltransferases explain era1 and ggb phenotypes.</title>
        <authorList>
            <person name="Andrews M."/>
            <person name="Huizinga D.H."/>
            <person name="Crowell D.N."/>
        </authorList>
    </citation>
    <scope>FUNCTION</scope>
    <scope>BIOPHYSICOCHEMICAL PROPERTIES</scope>
    <scope>CATALYTIC ACTIVITY</scope>
    <scope>COFACTOR</scope>
    <scope>SUBUNIT</scope>
</reference>
<reference key="8">
    <citation type="journal article" date="2016" name="Plant Cell Environ.">
        <title>ASG2 is a farnesylated DWD protein that acts as ABA negative regulator in Arabidopsis.</title>
        <authorList>
            <person name="Dutilleul C."/>
            <person name="Ribeiro I."/>
            <person name="Blanc N."/>
            <person name="Nezames C.D."/>
            <person name="Deng X.W."/>
            <person name="Zglobicki P."/>
            <person name="Palacio Barrera A.M."/>
            <person name="Atehortua L."/>
            <person name="Courtois M."/>
            <person name="Labas V."/>
            <person name="Giglioli-Guivarc'h N."/>
            <person name="Ducos E."/>
        </authorList>
    </citation>
    <scope>FUNCTION</scope>
    <scope>DISRUPTION PHENOTYPE</scope>
    <source>
        <strain>cv. Columbia</strain>
    </source>
</reference>
<accession>Q38920</accession>
<accession>A4VCL6</accession>
<accession>Q38916</accession>
<accession>Q8LPK8</accession>
<accession>Q9LLE9</accession>
<feature type="chain" id="PRO_0000119764" description="Protein farnesyltransferase subunit beta">
    <location>
        <begin position="1"/>
        <end position="482"/>
    </location>
</feature>
<feature type="repeat" description="PFTB 1">
    <location>
        <begin position="131"/>
        <end position="172"/>
    </location>
</feature>
<feature type="repeat" description="PFTB 2">
    <location>
        <begin position="182"/>
        <end position="223"/>
    </location>
</feature>
<feature type="repeat" description="PFTB 3">
    <location>
        <begin position="230"/>
        <end position="271"/>
    </location>
</feature>
<feature type="repeat" description="PFTB 4">
    <location>
        <begin position="278"/>
        <end position="319"/>
    </location>
</feature>
<feature type="repeat" description="PFTB 5">
    <location>
        <begin position="391"/>
        <end position="433"/>
    </location>
</feature>
<feature type="region of interest" description="Disordered" evidence="2">
    <location>
        <begin position="329"/>
        <end position="372"/>
    </location>
</feature>
<feature type="compositionally biased region" description="Acidic residues" evidence="2">
    <location>
        <begin position="348"/>
        <end position="368"/>
    </location>
</feature>
<feature type="binding site" evidence="1">
    <location>
        <begin position="256"/>
        <end position="259"/>
    </location>
    <ligand>
        <name>(2E,6E)-farnesyl diphosphate</name>
        <dbReference type="ChEBI" id="CHEBI:175763"/>
    </ligand>
</feature>
<feature type="binding site" evidence="1">
    <location>
        <begin position="298"/>
        <end position="301"/>
    </location>
    <ligand>
        <name>(2E,6E)-farnesyl diphosphate</name>
        <dbReference type="ChEBI" id="CHEBI:175763"/>
    </ligand>
</feature>
<feature type="binding site" evidence="1">
    <location>
        <position position="304"/>
    </location>
    <ligand>
        <name>Zn(2+)</name>
        <dbReference type="ChEBI" id="CHEBI:29105"/>
        <note>catalytic</note>
    </ligand>
</feature>
<feature type="binding site" evidence="1">
    <location>
        <position position="306"/>
    </location>
    <ligand>
        <name>Zn(2+)</name>
        <dbReference type="ChEBI" id="CHEBI:29105"/>
        <note>catalytic</note>
    </ligand>
</feature>
<feature type="binding site" evidence="1">
    <location>
        <begin position="307"/>
        <end position="310"/>
    </location>
    <ligand>
        <name>(2E,6E)-farnesyl diphosphate</name>
        <dbReference type="ChEBI" id="CHEBI:175763"/>
    </ligand>
</feature>
<feature type="binding site" evidence="1">
    <location>
        <position position="421"/>
    </location>
    <ligand>
        <name>Zn(2+)</name>
        <dbReference type="ChEBI" id="CHEBI:29105"/>
        <note>catalytic</note>
    </ligand>
</feature>
<feature type="site" description="Important for selectivity against geranylgeranyl diphosphate" evidence="1">
    <location>
        <position position="110"/>
    </location>
</feature>
<feature type="sequence conflict" description="In Ref. 5; AAM20474." evidence="8" ref="5">
    <original>E</original>
    <variation>K</variation>
    <location>
        <position position="129"/>
    </location>
</feature>
<feature type="sequence conflict" description="In Ref. 6; AAA86658/AAA87585." evidence="8" ref="6">
    <original>M</original>
    <variation>I</variation>
    <location>
        <position position="207"/>
    </location>
</feature>
<proteinExistence type="evidence at protein level"/>
<comment type="function">
    <text evidence="4 5">Catalyzes the transfer of a farnesyl moiety from farnesyl diphosphate to a cysteine at the fourth position from the C-terminus of several proteins having the C-terminal sequence Cys-aliphatic-aliphatic-X (CaaX) (PubMed:20565889). The beta subunit is responsible for peptide-binding (PubMed:20565889). Acts as an abscisic acid (ABA) negative regulator by mediating ASG2 farnesylation and consequently monitoring its subcellular localization (PubMed:26147561). Involved in responses to salt (NaCl) and osmotic (e.g. in response to mannitol and PEG) stresses (PubMed:26147561).</text>
</comment>
<comment type="catalytic activity">
    <reaction evidence="4">
        <text>L-cysteinyl-[protein] + (2E,6E)-farnesyl diphosphate = S-(2E,6E)-farnesyl-L-cysteinyl-[protein] + diphosphate</text>
        <dbReference type="Rhea" id="RHEA:13345"/>
        <dbReference type="Rhea" id="RHEA-COMP:10131"/>
        <dbReference type="Rhea" id="RHEA-COMP:11535"/>
        <dbReference type="ChEBI" id="CHEBI:29950"/>
        <dbReference type="ChEBI" id="CHEBI:33019"/>
        <dbReference type="ChEBI" id="CHEBI:86019"/>
        <dbReference type="ChEBI" id="CHEBI:175763"/>
        <dbReference type="EC" id="2.5.1.58"/>
    </reaction>
</comment>
<comment type="cofactor">
    <cofactor evidence="4">
        <name>Zn(2+)</name>
        <dbReference type="ChEBI" id="CHEBI:29105"/>
    </cofactor>
    <text evidence="4">Binds 1 zinc ion per subunit.</text>
</comment>
<comment type="biophysicochemical properties">
    <kinetics>
        <KM evidence="4">5.4 uM for CVIM substrate</KM>
        <KM evidence="4">5.5 uM for CVIQ substrate</KM>
        <KM evidence="4">6.9 uM for CVII substrate</KM>
        <KM evidence="4">7 uM for CVIL substrate</KM>
        <text>kcat is 49.1 h(-1), 28.8 h(-1), 12.8 h(-1) and 3.7 h(-1) for CVIQ, CVIM, CVII and CVIL substrates, respectively.</text>
    </kinetics>
</comment>
<comment type="subunit">
    <text evidence="4">Heterodimer of FTA and FTB (farnesyltransferase). Heterodimer of an alpha and a beta subunit.</text>
</comment>
<comment type="interaction">
    <interactant intactId="EBI-1553332">
        <id>Q38920</id>
    </interactant>
    <interactant intactId="EBI-1553317">
        <id>Q9LX33</id>
        <label>FTA</label>
    </interactant>
    <organismsDiffer>false</organismsDiffer>
    <experiments>4</experiments>
</comment>
<comment type="disruption phenotype">
    <text evidence="3 5">Plants show an increase in floral organ number, particularly in the sepals and petals, correlating with an increase in the width of young floral meristems (PubMed:10840062). Increased sensitivity to abscisic acid (ABA) as well as salt (NaCl) and osmotic (e.g. in response to mannitol and PEG) stresses in term of seed germination and roots elongation (PubMed:26147561).</text>
</comment>
<comment type="similarity">
    <text evidence="8">Belongs to the protein prenyltransferase subunit beta family.</text>
</comment>
<comment type="sequence caution" evidence="8">
    <conflict type="erroneous initiation">
        <sequence resource="EMBL-CDS" id="AAM20474"/>
    </conflict>
    <text>Truncated N-terminus.</text>
</comment>
<comment type="sequence caution" evidence="8">
    <conflict type="erroneous gene model prediction">
        <sequence resource="EMBL-CDS" id="BAB10909"/>
    </conflict>
</comment>
<organism>
    <name type="scientific">Arabidopsis thaliana</name>
    <name type="common">Mouse-ear cress</name>
    <dbReference type="NCBI Taxonomy" id="3702"/>
    <lineage>
        <taxon>Eukaryota</taxon>
        <taxon>Viridiplantae</taxon>
        <taxon>Streptophyta</taxon>
        <taxon>Embryophyta</taxon>
        <taxon>Tracheophyta</taxon>
        <taxon>Spermatophyta</taxon>
        <taxon>Magnoliopsida</taxon>
        <taxon>eudicotyledons</taxon>
        <taxon>Gunneridae</taxon>
        <taxon>Pentapetalae</taxon>
        <taxon>rosids</taxon>
        <taxon>malvids</taxon>
        <taxon>Brassicales</taxon>
        <taxon>Brassicaceae</taxon>
        <taxon>Camelineae</taxon>
        <taxon>Arabidopsis</taxon>
    </lineage>
</organism>
<evidence type="ECO:0000250" key="1">
    <source>
        <dbReference type="UniProtKB" id="P49356"/>
    </source>
</evidence>
<evidence type="ECO:0000256" key="2">
    <source>
        <dbReference type="SAM" id="MobiDB-lite"/>
    </source>
</evidence>
<evidence type="ECO:0000269" key="3">
    <source>
    </source>
</evidence>
<evidence type="ECO:0000269" key="4">
    <source>
    </source>
</evidence>
<evidence type="ECO:0000269" key="5">
    <source>
    </source>
</evidence>
<evidence type="ECO:0000303" key="6">
    <source>
    </source>
</evidence>
<evidence type="ECO:0000303" key="7">
    <source>
    </source>
</evidence>
<evidence type="ECO:0000305" key="8"/>
<evidence type="ECO:0000312" key="9">
    <source>
        <dbReference type="Araport" id="AT5G40280"/>
    </source>
</evidence>
<evidence type="ECO:0000312" key="10">
    <source>
        <dbReference type="EMBL" id="BAB10909.1"/>
    </source>
</evidence>
<sequence>MPVVTRLIRLKCVGLRLDRSGLNRRICHGGHGESTRRRVMEELSSLTVSQREQFLVENDVFGIYNYFDASDVSTQKYMMEIQRDKQLDYLMKGLRQLGPQFSSLDANRPWLCYWILHSIALLGETVDDELESNAIDFLGRCQGSEGGYGGGPGQLPHLATTYAAVNALVTLGGDKALSSINREKMSCFLRRMKDTSGGFRMHDMGEMDVRACYTAISVASILNIMDDELTQGLGDYILSCQTYEGGIGGEPGSEAHGGYTYCGLAAMILINEVDRLNLDSLMNWAVHRQGVEMGFQGRTNKLVDGCYTFWQAAPCVLLQRLYSTNDHDVHGSSHISEGTNEEHHAHDEDDLEDSDDDDDSDEDNDEDSVNGHRIHHTSTYINRRMQLVFDSLGLQRYVLLCSKIPDGGFRDKPRKPRDFYHTCYCLSGLSVAQHAWLKDEDTPPLTRDIMGGYSNLLEPVQLLHNIVMDQYNEAIEFFFKAA</sequence>